<proteinExistence type="inferred from homology"/>
<feature type="chain" id="PRO_0000123350" description="Small ribosomal subunit protein uS11y">
    <location>
        <begin position="1"/>
        <end position="150"/>
    </location>
</feature>
<feature type="region of interest" description="Disordered" evidence="1">
    <location>
        <begin position="129"/>
        <end position="150"/>
    </location>
</feature>
<feature type="compositionally biased region" description="Basic residues" evidence="1">
    <location>
        <begin position="141"/>
        <end position="150"/>
    </location>
</feature>
<keyword id="KW-1185">Reference proteome</keyword>
<keyword id="KW-0687">Ribonucleoprotein</keyword>
<keyword id="KW-0689">Ribosomal protein</keyword>
<dbReference type="PIR" id="B30097">
    <property type="entry name" value="B30097"/>
</dbReference>
<dbReference type="SMR" id="P19951"/>
<dbReference type="STRING" id="4577.P19951"/>
<dbReference type="PaxDb" id="4577-GRMZM2G069762_P03"/>
<dbReference type="ProMEX" id="P19951"/>
<dbReference type="MaizeGDB" id="69559"/>
<dbReference type="eggNOG" id="KOG0407">
    <property type="taxonomic scope" value="Eukaryota"/>
</dbReference>
<dbReference type="InParanoid" id="P19951"/>
<dbReference type="Proteomes" id="UP000007305">
    <property type="component" value="Unplaced"/>
</dbReference>
<dbReference type="ExpressionAtlas" id="P19951">
    <property type="expression patterns" value="baseline and differential"/>
</dbReference>
<dbReference type="GO" id="GO:0022627">
    <property type="term" value="C:cytosolic small ribosomal subunit"/>
    <property type="evidence" value="ECO:0000318"/>
    <property type="project" value="GO_Central"/>
</dbReference>
<dbReference type="GO" id="GO:0003735">
    <property type="term" value="F:structural constituent of ribosome"/>
    <property type="evidence" value="ECO:0000318"/>
    <property type="project" value="GO_Central"/>
</dbReference>
<dbReference type="GO" id="GO:0000028">
    <property type="term" value="P:ribosomal small subunit assembly"/>
    <property type="evidence" value="ECO:0000318"/>
    <property type="project" value="GO_Central"/>
</dbReference>
<dbReference type="GO" id="GO:0006412">
    <property type="term" value="P:translation"/>
    <property type="evidence" value="ECO:0000318"/>
    <property type="project" value="GO_Central"/>
</dbReference>
<dbReference type="FunFam" id="3.30.420.80:FF:000002">
    <property type="entry name" value="40S ribosomal protein S14"/>
    <property type="match status" value="1"/>
</dbReference>
<dbReference type="Gene3D" id="3.30.420.80">
    <property type="entry name" value="Ribosomal protein S11"/>
    <property type="match status" value="1"/>
</dbReference>
<dbReference type="HAMAP" id="MF_01310">
    <property type="entry name" value="Ribosomal_uS11"/>
    <property type="match status" value="1"/>
</dbReference>
<dbReference type="InterPro" id="IPR001971">
    <property type="entry name" value="Ribosomal_uS11"/>
</dbReference>
<dbReference type="InterPro" id="IPR018102">
    <property type="entry name" value="Ribosomal_uS11_CS"/>
</dbReference>
<dbReference type="InterPro" id="IPR036967">
    <property type="entry name" value="Ribosomal_uS11_sf"/>
</dbReference>
<dbReference type="NCBIfam" id="NF007176">
    <property type="entry name" value="PRK09607.1"/>
    <property type="match status" value="1"/>
</dbReference>
<dbReference type="PANTHER" id="PTHR11759">
    <property type="entry name" value="40S RIBOSOMAL PROTEIN S14/30S RIBOSOMAL PROTEIN S11"/>
    <property type="match status" value="1"/>
</dbReference>
<dbReference type="Pfam" id="PF00411">
    <property type="entry name" value="Ribosomal_S11"/>
    <property type="match status" value="1"/>
</dbReference>
<dbReference type="PIRSF" id="PIRSF002131">
    <property type="entry name" value="Ribosomal_S11"/>
    <property type="match status" value="1"/>
</dbReference>
<dbReference type="SUPFAM" id="SSF53137">
    <property type="entry name" value="Translational machinery components"/>
    <property type="match status" value="1"/>
</dbReference>
<dbReference type="PROSITE" id="PS00054">
    <property type="entry name" value="RIBOSOMAL_S11"/>
    <property type="match status" value="1"/>
</dbReference>
<reference key="1">
    <citation type="journal article" date="1989" name="Genes Dev.">
        <title>The organization and expression of a maize ribosomal protein gene family.</title>
        <authorList>
            <person name="Larkin J.C."/>
            <person name="Hunsperger J.P."/>
            <person name="Culley D."/>
            <person name="Rubenstein I."/>
            <person name="Silflow C.D."/>
        </authorList>
    </citation>
    <scope>NUCLEOTIDE SEQUENCE</scope>
</reference>
<accession>P19951</accession>
<name>RS142_MAIZE</name>
<protein>
    <recommendedName>
        <fullName evidence="2">Small ribosomal subunit protein uS11y</fullName>
    </recommendedName>
    <alternativeName>
        <fullName evidence="2">40S ribosomal protein S14</fullName>
    </alternativeName>
    <alternativeName>
        <fullName>Clone MCH2</fullName>
    </alternativeName>
</protein>
<evidence type="ECO:0000256" key="1">
    <source>
        <dbReference type="SAM" id="MobiDB-lite"/>
    </source>
</evidence>
<evidence type="ECO:0000305" key="2"/>
<comment type="similarity">
    <text evidence="2">Belongs to the universal ribosomal protein uS11 family.</text>
</comment>
<organism>
    <name type="scientific">Zea mays</name>
    <name type="common">Maize</name>
    <dbReference type="NCBI Taxonomy" id="4577"/>
    <lineage>
        <taxon>Eukaryota</taxon>
        <taxon>Viridiplantae</taxon>
        <taxon>Streptophyta</taxon>
        <taxon>Embryophyta</taxon>
        <taxon>Tracheophyta</taxon>
        <taxon>Spermatophyta</taxon>
        <taxon>Magnoliopsida</taxon>
        <taxon>Liliopsida</taxon>
        <taxon>Poales</taxon>
        <taxon>Poaceae</taxon>
        <taxon>PACMAD clade</taxon>
        <taxon>Panicoideae</taxon>
        <taxon>Andropogonodae</taxon>
        <taxon>Andropogoneae</taxon>
        <taxon>Tripsacinae</taxon>
        <taxon>Zea</taxon>
    </lineage>
</organism>
<sequence>MSGRKKTREPKEENVLGPAVREGEHVFGVAHIFASFNDTFIHVTDLSGRETLVRITGGMKVKADRDESSPYAAMLASQDVAQRCKELGITALHIKLRATGGNKTKTPGPGAQSALRALARSGMKIGRIEDVTPVPTDSTRRKGGRRGRRL</sequence>